<gene>
    <name evidence="1" type="primary">prpE</name>
    <name type="ordered locus">BC_1202</name>
</gene>
<organism>
    <name type="scientific">Bacillus cereus (strain ATCC 14579 / DSM 31 / CCUG 7414 / JCM 2152 / NBRC 15305 / NCIMB 9373 / NCTC 2599 / NRRL B-3711)</name>
    <dbReference type="NCBI Taxonomy" id="226900"/>
    <lineage>
        <taxon>Bacteria</taxon>
        <taxon>Bacillati</taxon>
        <taxon>Bacillota</taxon>
        <taxon>Bacilli</taxon>
        <taxon>Bacillales</taxon>
        <taxon>Bacillaceae</taxon>
        <taxon>Bacillus</taxon>
        <taxon>Bacillus cereus group</taxon>
    </lineage>
</organism>
<comment type="function">
    <text evidence="1">Asymmetrically hydrolyzes Ap4p to yield AMP and ATP.</text>
</comment>
<comment type="catalytic activity">
    <reaction evidence="1">
        <text>P(1),P(4)-bis(5'-guanosyl) tetraphosphate + H2O = GMP + GTP + 2 H(+)</text>
        <dbReference type="Rhea" id="RHEA:22484"/>
        <dbReference type="ChEBI" id="CHEBI:15377"/>
        <dbReference type="ChEBI" id="CHEBI:15378"/>
        <dbReference type="ChEBI" id="CHEBI:37565"/>
        <dbReference type="ChEBI" id="CHEBI:57553"/>
        <dbReference type="ChEBI" id="CHEBI:58115"/>
        <dbReference type="EC" id="3.6.1.17"/>
    </reaction>
</comment>
<comment type="cofactor">
    <cofactor evidence="1">
        <name>Ni(2+)</name>
        <dbReference type="ChEBI" id="CHEBI:49786"/>
    </cofactor>
</comment>
<comment type="similarity">
    <text evidence="1">Belongs to the PrpE family.</text>
</comment>
<protein>
    <recommendedName>
        <fullName evidence="1">Bis(5'-nucleosyl)-tetraphosphatase PrpE [asymmetrical]</fullName>
        <ecNumber evidence="1">3.6.1.17</ecNumber>
    </recommendedName>
    <alternativeName>
        <fullName evidence="1">Ap4A hydrolase</fullName>
    </alternativeName>
    <alternativeName>
        <fullName evidence="1">Diadenosine 5',5'''-P1,P4-tetraphosphate asymmetrical hydrolase</fullName>
        <shortName evidence="1">Diadenosine tetraphosphatase</shortName>
    </alternativeName>
</protein>
<proteinExistence type="inferred from homology"/>
<reference key="1">
    <citation type="journal article" date="2003" name="Nature">
        <title>Genome sequence of Bacillus cereus and comparative analysis with Bacillus anthracis.</title>
        <authorList>
            <person name="Ivanova N."/>
            <person name="Sorokin A."/>
            <person name="Anderson I."/>
            <person name="Galleron N."/>
            <person name="Candelon B."/>
            <person name="Kapatral V."/>
            <person name="Bhattacharyya A."/>
            <person name="Reznik G."/>
            <person name="Mikhailova N."/>
            <person name="Lapidus A."/>
            <person name="Chu L."/>
            <person name="Mazur M."/>
            <person name="Goltsman E."/>
            <person name="Larsen N."/>
            <person name="D'Souza M."/>
            <person name="Walunas T."/>
            <person name="Grechkin Y."/>
            <person name="Pusch G."/>
            <person name="Haselkorn R."/>
            <person name="Fonstein M."/>
            <person name="Ehrlich S.D."/>
            <person name="Overbeek R."/>
            <person name="Kyrpides N.C."/>
        </authorList>
    </citation>
    <scope>NUCLEOTIDE SEQUENCE [LARGE SCALE GENOMIC DNA]</scope>
    <source>
        <strain>ATCC 14579 / DSM 31 / CCUG 7414 / JCM 2152 / NBRC 15305 / NCIMB 9373 / NCTC 2599 / NRRL B-3711</strain>
    </source>
</reference>
<dbReference type="EC" id="3.6.1.17" evidence="1"/>
<dbReference type="EMBL" id="AE016877">
    <property type="protein sequence ID" value="AAP08187.1"/>
    <property type="molecule type" value="Genomic_DNA"/>
</dbReference>
<dbReference type="RefSeq" id="NP_830986.1">
    <property type="nucleotide sequence ID" value="NC_004722.1"/>
</dbReference>
<dbReference type="RefSeq" id="WP_000872698.1">
    <property type="nucleotide sequence ID" value="NZ_CP138336.1"/>
</dbReference>
<dbReference type="SMR" id="Q81GJ7"/>
<dbReference type="STRING" id="226900.BC_1202"/>
<dbReference type="KEGG" id="bce:BC1202"/>
<dbReference type="PATRIC" id="fig|226900.8.peg.1171"/>
<dbReference type="HOGENOM" id="CLU_023125_3_0_9"/>
<dbReference type="OrthoDB" id="9807890at2"/>
<dbReference type="Proteomes" id="UP000001417">
    <property type="component" value="Chromosome"/>
</dbReference>
<dbReference type="GO" id="GO:0005737">
    <property type="term" value="C:cytoplasm"/>
    <property type="evidence" value="ECO:0000318"/>
    <property type="project" value="GO_Central"/>
</dbReference>
<dbReference type="GO" id="GO:0004081">
    <property type="term" value="F:bis(5'-nucleosyl)-tetraphosphatase (asymmetrical) activity"/>
    <property type="evidence" value="ECO:0007669"/>
    <property type="project" value="UniProtKB-UniRule"/>
</dbReference>
<dbReference type="GO" id="GO:0005525">
    <property type="term" value="F:GTP binding"/>
    <property type="evidence" value="ECO:0007669"/>
    <property type="project" value="UniProtKB-KW"/>
</dbReference>
<dbReference type="GO" id="GO:0016151">
    <property type="term" value="F:nickel cation binding"/>
    <property type="evidence" value="ECO:0007669"/>
    <property type="project" value="UniProtKB-UniRule"/>
</dbReference>
<dbReference type="GO" id="GO:0016791">
    <property type="term" value="F:phosphatase activity"/>
    <property type="evidence" value="ECO:0000318"/>
    <property type="project" value="GO_Central"/>
</dbReference>
<dbReference type="CDD" id="cd07423">
    <property type="entry name" value="MPP_Prp_like"/>
    <property type="match status" value="1"/>
</dbReference>
<dbReference type="Gene3D" id="3.60.21.10">
    <property type="match status" value="1"/>
</dbReference>
<dbReference type="HAMAP" id="MF_01443">
    <property type="entry name" value="PrpE"/>
    <property type="match status" value="1"/>
</dbReference>
<dbReference type="InterPro" id="IPR050126">
    <property type="entry name" value="Ap4A_hydrolase"/>
</dbReference>
<dbReference type="InterPro" id="IPR023937">
    <property type="entry name" value="Bis(5'-nucleosyl)-tetraP_PrpE"/>
</dbReference>
<dbReference type="InterPro" id="IPR004843">
    <property type="entry name" value="Calcineurin-like_PHP_ApaH"/>
</dbReference>
<dbReference type="InterPro" id="IPR029052">
    <property type="entry name" value="Metallo-depent_PP-like"/>
</dbReference>
<dbReference type="InterPro" id="IPR041780">
    <property type="entry name" value="MPP_PrpE-like"/>
</dbReference>
<dbReference type="NCBIfam" id="NF010148">
    <property type="entry name" value="PRK13625.1"/>
    <property type="match status" value="1"/>
</dbReference>
<dbReference type="PANTHER" id="PTHR42850:SF7">
    <property type="entry name" value="BIS(5'-NUCLEOSYL)-TETRAPHOSPHATASE PRPE [ASYMMETRICAL]"/>
    <property type="match status" value="1"/>
</dbReference>
<dbReference type="PANTHER" id="PTHR42850">
    <property type="entry name" value="METALLOPHOSPHOESTERASE"/>
    <property type="match status" value="1"/>
</dbReference>
<dbReference type="Pfam" id="PF00149">
    <property type="entry name" value="Metallophos"/>
    <property type="match status" value="1"/>
</dbReference>
<dbReference type="SUPFAM" id="SSF56300">
    <property type="entry name" value="Metallo-dependent phosphatases"/>
    <property type="match status" value="1"/>
</dbReference>
<feature type="chain" id="PRO_0000297697" description="Bis(5'-nucleosyl)-tetraphosphatase PrpE [asymmetrical]">
    <location>
        <begin position="1"/>
        <end position="246"/>
    </location>
</feature>
<evidence type="ECO:0000255" key="1">
    <source>
        <dbReference type="HAMAP-Rule" id="MF_01443"/>
    </source>
</evidence>
<sequence>MKYDIIGDIHGCFQEFQNLTEKLGYNWSSGLPVHPDQRKLAFVGDITDRGPHSLRMIEIVWELVIHKKEAYYAPGNHCNKLYRFFLGRNVTVAHGLETTVAEYEALPSHKQNIIKEKFITLYEQSPLYHILDEKRVIVCHAGIRQDYIGRRDKKVQTFVLYGDITGEKHADGSPVRRDWAQEYKGQAWIVYGHTPVAEPRFVNQTVNIDTGAVFGGKLTGLRYPEMETISVPSSLPFVAEKFRPIS</sequence>
<name>PRPE_BACCR</name>
<accession>Q81GJ7</accession>
<keyword id="KW-0342">GTP-binding</keyword>
<keyword id="KW-0378">Hydrolase</keyword>
<keyword id="KW-0533">Nickel</keyword>
<keyword id="KW-0547">Nucleotide-binding</keyword>
<keyword id="KW-1185">Reference proteome</keyword>